<reference key="1">
    <citation type="journal article" date="2004" name="J. Infect. Dis.">
        <title>Progress toward characterization of the group A Streptococcus metagenome: complete genome sequence of a macrolide-resistant serotype M6 strain.</title>
        <authorList>
            <person name="Banks D.J."/>
            <person name="Porcella S.F."/>
            <person name="Barbian K.D."/>
            <person name="Beres S.B."/>
            <person name="Philips L.E."/>
            <person name="Voyich J.M."/>
            <person name="DeLeo F.R."/>
            <person name="Martin J.M."/>
            <person name="Somerville G.A."/>
            <person name="Musser J.M."/>
        </authorList>
    </citation>
    <scope>NUCLEOTIDE SEQUENCE [LARGE SCALE GENOMIC DNA]</scope>
    <source>
        <strain>ATCC BAA-946 / MGAS10394</strain>
    </source>
</reference>
<organism>
    <name type="scientific">Streptococcus pyogenes serotype M6 (strain ATCC BAA-946 / MGAS10394)</name>
    <dbReference type="NCBI Taxonomy" id="286636"/>
    <lineage>
        <taxon>Bacteria</taxon>
        <taxon>Bacillati</taxon>
        <taxon>Bacillota</taxon>
        <taxon>Bacilli</taxon>
        <taxon>Lactobacillales</taxon>
        <taxon>Streptococcaceae</taxon>
        <taxon>Streptococcus</taxon>
    </lineage>
</organism>
<gene>
    <name evidence="1" type="primary">thyA</name>
    <name type="ordered locus">M6_Spy0705</name>
</gene>
<sequence>MTKADQIFKANIQKIINEGSLSEQARPKYKDGRTAHSKYITGAFAEYDLAKGEFPITTLRPIPIKSAIKELFWIYQDQSNSLDVLEAKYNVHYWNEWEVDQTRTIGQRYGAVVKKHDIISKILKQLAENPWNRRNVISLWDYEAFEETKGLLPCAFQIMFDVRRVGEDLYLDASLTQRSNDILVAHHINAMQYVALQMMIAKHFGWKIGKFFYFVNNLHIYDNQFDQAQELLKRQPVASQPKLVLNVPDGTNFFDIKPDDFELQNYDPVKPQLHFDLAI</sequence>
<protein>
    <recommendedName>
        <fullName evidence="1">Thymidylate synthase</fullName>
        <shortName evidence="1">TS</shortName>
        <shortName evidence="1">TSase</shortName>
        <ecNumber evidence="1">2.1.1.45</ecNumber>
    </recommendedName>
</protein>
<comment type="function">
    <text evidence="1">Catalyzes the reductive methylation of 2'-deoxyuridine-5'-monophosphate (dUMP) to 2'-deoxythymidine-5'-monophosphate (dTMP) while utilizing 5,10-methylenetetrahydrofolate (mTHF) as the methyl donor and reductant in the reaction, yielding dihydrofolate (DHF) as a by-product. This enzymatic reaction provides an intracellular de novo source of dTMP, an essential precursor for DNA biosynthesis.</text>
</comment>
<comment type="catalytic activity">
    <reaction evidence="1">
        <text>dUMP + (6R)-5,10-methylene-5,6,7,8-tetrahydrofolate = 7,8-dihydrofolate + dTMP</text>
        <dbReference type="Rhea" id="RHEA:12104"/>
        <dbReference type="ChEBI" id="CHEBI:15636"/>
        <dbReference type="ChEBI" id="CHEBI:57451"/>
        <dbReference type="ChEBI" id="CHEBI:63528"/>
        <dbReference type="ChEBI" id="CHEBI:246422"/>
        <dbReference type="EC" id="2.1.1.45"/>
    </reaction>
</comment>
<comment type="pathway">
    <text evidence="1">Pyrimidine metabolism; dTTP biosynthesis.</text>
</comment>
<comment type="subunit">
    <text evidence="1">Homodimer.</text>
</comment>
<comment type="subcellular location">
    <subcellularLocation>
        <location evidence="1">Cytoplasm</location>
    </subcellularLocation>
</comment>
<comment type="similarity">
    <text evidence="1">Belongs to the thymidylate synthase family. Bacterial-type ThyA subfamily.</text>
</comment>
<comment type="sequence caution" evidence="2">
    <conflict type="erroneous initiation">
        <sequence resource="EMBL-CDS" id="AAT86840"/>
    </conflict>
</comment>
<feature type="chain" id="PRO_0000141034" description="Thymidylate synthase">
    <location>
        <begin position="1"/>
        <end position="279"/>
    </location>
</feature>
<feature type="active site" description="Nucleophile" evidence="1">
    <location>
        <position position="154"/>
    </location>
</feature>
<feature type="binding site" evidence="1">
    <location>
        <begin position="133"/>
        <end position="134"/>
    </location>
    <ligand>
        <name>dUMP</name>
        <dbReference type="ChEBI" id="CHEBI:246422"/>
        <note>ligand shared between dimeric partners</note>
    </ligand>
</feature>
<feature type="binding site" description="in other chain" evidence="1">
    <location>
        <begin position="178"/>
        <end position="181"/>
    </location>
    <ligand>
        <name>dUMP</name>
        <dbReference type="ChEBI" id="CHEBI:246422"/>
        <note>ligand shared between dimeric partners</note>
    </ligand>
</feature>
<feature type="binding site" evidence="1">
    <location>
        <position position="181"/>
    </location>
    <ligand>
        <name>(6R)-5,10-methylene-5,6,7,8-tetrahydrofolate</name>
        <dbReference type="ChEBI" id="CHEBI:15636"/>
    </ligand>
</feature>
<feature type="binding site" description="in other chain" evidence="1">
    <location>
        <position position="189"/>
    </location>
    <ligand>
        <name>dUMP</name>
        <dbReference type="ChEBI" id="CHEBI:246422"/>
        <note>ligand shared between dimeric partners</note>
    </ligand>
</feature>
<feature type="binding site" description="in other chain" evidence="1">
    <location>
        <begin position="219"/>
        <end position="221"/>
    </location>
    <ligand>
        <name>dUMP</name>
        <dbReference type="ChEBI" id="CHEBI:246422"/>
        <note>ligand shared between dimeric partners</note>
    </ligand>
</feature>
<feature type="binding site" evidence="1">
    <location>
        <position position="278"/>
    </location>
    <ligand>
        <name>(6R)-5,10-methylene-5,6,7,8-tetrahydrofolate</name>
        <dbReference type="ChEBI" id="CHEBI:15636"/>
    </ligand>
</feature>
<keyword id="KW-0963">Cytoplasm</keyword>
<keyword id="KW-0489">Methyltransferase</keyword>
<keyword id="KW-0545">Nucleotide biosynthesis</keyword>
<keyword id="KW-0808">Transferase</keyword>
<dbReference type="EC" id="2.1.1.45" evidence="1"/>
<dbReference type="EMBL" id="CP000003">
    <property type="protein sequence ID" value="AAT86840.1"/>
    <property type="status" value="ALT_INIT"/>
    <property type="molecule type" value="Genomic_DNA"/>
</dbReference>
<dbReference type="RefSeq" id="WP_011017679.1">
    <property type="nucleotide sequence ID" value="NC_006086.1"/>
</dbReference>
<dbReference type="SMR" id="Q5XCM3"/>
<dbReference type="KEGG" id="spa:M6_Spy0705"/>
<dbReference type="HOGENOM" id="CLU_021669_0_0_9"/>
<dbReference type="UniPathway" id="UPA00575"/>
<dbReference type="Proteomes" id="UP000001167">
    <property type="component" value="Chromosome"/>
</dbReference>
<dbReference type="GO" id="GO:0005829">
    <property type="term" value="C:cytosol"/>
    <property type="evidence" value="ECO:0007669"/>
    <property type="project" value="TreeGrafter"/>
</dbReference>
<dbReference type="GO" id="GO:0004799">
    <property type="term" value="F:thymidylate synthase activity"/>
    <property type="evidence" value="ECO:0007669"/>
    <property type="project" value="UniProtKB-UniRule"/>
</dbReference>
<dbReference type="GO" id="GO:0006231">
    <property type="term" value="P:dTMP biosynthetic process"/>
    <property type="evidence" value="ECO:0007669"/>
    <property type="project" value="UniProtKB-UniRule"/>
</dbReference>
<dbReference type="GO" id="GO:0006235">
    <property type="term" value="P:dTTP biosynthetic process"/>
    <property type="evidence" value="ECO:0007669"/>
    <property type="project" value="UniProtKB-UniRule"/>
</dbReference>
<dbReference type="GO" id="GO:0032259">
    <property type="term" value="P:methylation"/>
    <property type="evidence" value="ECO:0007669"/>
    <property type="project" value="UniProtKB-KW"/>
</dbReference>
<dbReference type="CDD" id="cd00351">
    <property type="entry name" value="TS_Pyrimidine_HMase"/>
    <property type="match status" value="1"/>
</dbReference>
<dbReference type="Gene3D" id="3.30.572.10">
    <property type="entry name" value="Thymidylate synthase/dCMP hydroxymethylase domain"/>
    <property type="match status" value="1"/>
</dbReference>
<dbReference type="HAMAP" id="MF_00008">
    <property type="entry name" value="Thymidy_synth_bact"/>
    <property type="match status" value="1"/>
</dbReference>
<dbReference type="InterPro" id="IPR045097">
    <property type="entry name" value="Thymidate_synth/dCMP_Mease"/>
</dbReference>
<dbReference type="InterPro" id="IPR023451">
    <property type="entry name" value="Thymidate_synth/dCMP_Mease_dom"/>
</dbReference>
<dbReference type="InterPro" id="IPR036926">
    <property type="entry name" value="Thymidate_synth/dCMP_Mease_sf"/>
</dbReference>
<dbReference type="InterPro" id="IPR000398">
    <property type="entry name" value="Thymidylate_synthase"/>
</dbReference>
<dbReference type="InterPro" id="IPR020940">
    <property type="entry name" value="Thymidylate_synthase_AS"/>
</dbReference>
<dbReference type="NCBIfam" id="NF002495">
    <property type="entry name" value="PRK01827.1-1"/>
    <property type="match status" value="1"/>
</dbReference>
<dbReference type="PANTHER" id="PTHR11548">
    <property type="entry name" value="THYMIDYLATE SYNTHASE 1"/>
    <property type="match status" value="1"/>
</dbReference>
<dbReference type="PANTHER" id="PTHR11548:SF1">
    <property type="entry name" value="THYMIDYLATE SYNTHASE 1"/>
    <property type="match status" value="1"/>
</dbReference>
<dbReference type="Pfam" id="PF00303">
    <property type="entry name" value="Thymidylat_synt"/>
    <property type="match status" value="1"/>
</dbReference>
<dbReference type="PRINTS" id="PR00108">
    <property type="entry name" value="THYMDSNTHASE"/>
</dbReference>
<dbReference type="SUPFAM" id="SSF55831">
    <property type="entry name" value="Thymidylate synthase/dCMP hydroxymethylase"/>
    <property type="match status" value="1"/>
</dbReference>
<dbReference type="PROSITE" id="PS00091">
    <property type="entry name" value="THYMIDYLATE_SYNTHASE"/>
    <property type="match status" value="1"/>
</dbReference>
<proteinExistence type="inferred from homology"/>
<evidence type="ECO:0000255" key="1">
    <source>
        <dbReference type="HAMAP-Rule" id="MF_00008"/>
    </source>
</evidence>
<evidence type="ECO:0000305" key="2"/>
<accession>Q5XCM3</accession>
<name>TYSY_STRP6</name>